<evidence type="ECO:0000250" key="1"/>
<evidence type="ECO:0000255" key="2"/>
<evidence type="ECO:0000305" key="3"/>
<organism>
    <name type="scientific">Ajellomyces capsulatus (strain G186AR / H82 / ATCC MYA-2454 / RMSCC 2432)</name>
    <name type="common">Darling's disease fungus</name>
    <name type="synonym">Histoplasma capsulatum</name>
    <dbReference type="NCBI Taxonomy" id="447093"/>
    <lineage>
        <taxon>Eukaryota</taxon>
        <taxon>Fungi</taxon>
        <taxon>Dikarya</taxon>
        <taxon>Ascomycota</taxon>
        <taxon>Pezizomycotina</taxon>
        <taxon>Eurotiomycetes</taxon>
        <taxon>Eurotiomycetidae</taxon>
        <taxon>Onygenales</taxon>
        <taxon>Ajellomycetaceae</taxon>
        <taxon>Histoplasma</taxon>
    </lineage>
</organism>
<gene>
    <name type="primary">MZM1</name>
    <name type="ORF">HCBG_08415</name>
</gene>
<comment type="function">
    <text evidence="1">Assembly factor required for Rieske Fe-S protein RIP1 incorporation into the cytochrome b-c1 (CIII) complex. Functions as a chaperone, binding to this subunit within the mitochondrial matrix and stabilizing it prior to its translocation and insertion into the late CIII dimeric intermediate within the mitochondrial inner membrane. Modulates the mitochondrial matrix zinc pool (By similarity).</text>
</comment>
<comment type="subunit">
    <text evidence="1">Interacts with RIP1.</text>
</comment>
<comment type="subcellular location">
    <subcellularLocation>
        <location evidence="1">Mitochondrion matrix</location>
    </subcellularLocation>
</comment>
<comment type="similarity">
    <text evidence="3">Belongs to the complex I LYR family. MZM1 subfamily.</text>
</comment>
<proteinExistence type="inferred from homology"/>
<feature type="transit peptide" description="Mitochondrion" evidence="2">
    <location>
        <begin position="1"/>
        <end status="unknown"/>
    </location>
</feature>
<feature type="chain" id="PRO_0000405474" description="Mitochondrial zinc maintenance protein 1, mitochondrial">
    <location>
        <begin status="unknown"/>
        <end position="153"/>
    </location>
</feature>
<sequence length="153" mass="17344">MAATTAPNPLTAYRFLLRATRIAFQGDFTTLHAARAEARKQFDQHRKQGVDTPMRIQHAMETAEILRTNVVQGVKISGAGEEAERYASILVMRRFRGEYEGEDERREKEEAMRELRIHEHIERGDNDSIKTAGKNERVKVAVGKACSNTQSSE</sequence>
<dbReference type="EMBL" id="GG663377">
    <property type="protein sequence ID" value="EEH03475.1"/>
    <property type="molecule type" value="Genomic_DNA"/>
</dbReference>
<dbReference type="SMR" id="C0NZ35"/>
<dbReference type="FunCoup" id="C0NZ35">
    <property type="interactions" value="11"/>
</dbReference>
<dbReference type="STRING" id="447093.C0NZ35"/>
<dbReference type="VEuPathDB" id="FungiDB:I7I50_08798"/>
<dbReference type="HOGENOM" id="CLU_147114_2_2_1"/>
<dbReference type="InParanoid" id="C0NZ35"/>
<dbReference type="Proteomes" id="UP000001631">
    <property type="component" value="Unassembled WGS sequence"/>
</dbReference>
<dbReference type="GO" id="GO:0005759">
    <property type="term" value="C:mitochondrial matrix"/>
    <property type="evidence" value="ECO:0007669"/>
    <property type="project" value="UniProtKB-SubCell"/>
</dbReference>
<dbReference type="GO" id="GO:0044183">
    <property type="term" value="F:protein folding chaperone"/>
    <property type="evidence" value="ECO:0007669"/>
    <property type="project" value="TreeGrafter"/>
</dbReference>
<dbReference type="GO" id="GO:0034551">
    <property type="term" value="P:mitochondrial respiratory chain complex III assembly"/>
    <property type="evidence" value="ECO:0007669"/>
    <property type="project" value="InterPro"/>
</dbReference>
<dbReference type="CDD" id="cd20267">
    <property type="entry name" value="Complex1_LYR_LYRM7"/>
    <property type="match status" value="1"/>
</dbReference>
<dbReference type="InterPro" id="IPR045298">
    <property type="entry name" value="Complex1_LYR_LYRM7"/>
</dbReference>
<dbReference type="InterPro" id="IPR050435">
    <property type="entry name" value="MZM1/LYRM7"/>
</dbReference>
<dbReference type="PANTHER" id="PTHR46749">
    <property type="entry name" value="COMPLEX III ASSEMBLY FACTOR LYRM7"/>
    <property type="match status" value="1"/>
</dbReference>
<dbReference type="PANTHER" id="PTHR46749:SF1">
    <property type="entry name" value="COMPLEX III ASSEMBLY FACTOR LYRM7"/>
    <property type="match status" value="1"/>
</dbReference>
<protein>
    <recommendedName>
        <fullName>Mitochondrial zinc maintenance protein 1, mitochondrial</fullName>
    </recommendedName>
</protein>
<name>MZM1_AJECG</name>
<accession>C0NZ35</accession>
<keyword id="KW-0143">Chaperone</keyword>
<keyword id="KW-0496">Mitochondrion</keyword>
<keyword id="KW-1185">Reference proteome</keyword>
<keyword id="KW-0809">Transit peptide</keyword>
<reference key="1">
    <citation type="submission" date="2009-02" db="EMBL/GenBank/DDBJ databases">
        <title>The genome sequence of Ajellomyces capsulatus strain G186AR.</title>
        <authorList>
            <person name="Champion M."/>
            <person name="Cuomo C.A."/>
            <person name="Ma L.-J."/>
            <person name="Henn M.R."/>
            <person name="Sil A."/>
            <person name="Goldman B."/>
            <person name="Young S.K."/>
            <person name="Kodira C.D."/>
            <person name="Zeng Q."/>
            <person name="Koehrsen M."/>
            <person name="Alvarado L."/>
            <person name="Berlin A."/>
            <person name="Borenstein D."/>
            <person name="Chen Z."/>
            <person name="Engels R."/>
            <person name="Freedman E."/>
            <person name="Gellesch M."/>
            <person name="Goldberg J."/>
            <person name="Griggs A."/>
            <person name="Gujja S."/>
            <person name="Heiman D."/>
            <person name="Hepburn T."/>
            <person name="Howarth C."/>
            <person name="Jen D."/>
            <person name="Larson L."/>
            <person name="Lewis B."/>
            <person name="Mehta T."/>
            <person name="Park D."/>
            <person name="Pearson M."/>
            <person name="Roberts A."/>
            <person name="Saif S."/>
            <person name="Shea T."/>
            <person name="Shenoy N."/>
            <person name="Sisk P."/>
            <person name="Stolte C."/>
            <person name="Sykes S."/>
            <person name="Walk T."/>
            <person name="White J."/>
            <person name="Yandava C."/>
            <person name="Klein B."/>
            <person name="McEwen J.G."/>
            <person name="Puccia R."/>
            <person name="Goldman G.H."/>
            <person name="Felipe M.S."/>
            <person name="Nino-Vega G."/>
            <person name="San-Blas G."/>
            <person name="Taylor J."/>
            <person name="Mendoza L."/>
            <person name="Galagan J.E."/>
            <person name="Nusbaum C."/>
            <person name="Birren B.W."/>
        </authorList>
    </citation>
    <scope>NUCLEOTIDE SEQUENCE [LARGE SCALE GENOMIC DNA]</scope>
    <source>
        <strain>G186AR / H82 / ATCC MYA-2454 / RMSCC 2432</strain>
    </source>
</reference>